<reference key="1">
    <citation type="journal article" date="1978" name="Cell">
        <title>Genes and spacers of cloned sea urchin histone DNA analyzed by sequencing.</title>
        <authorList>
            <person name="Schaffner W."/>
            <person name="Kunz G."/>
            <person name="Daetwyler H."/>
            <person name="Telford J."/>
            <person name="Smith H.O."/>
            <person name="Birnstiel M.L."/>
        </authorList>
    </citation>
    <scope>NUCLEOTIDE SEQUENCE [GENOMIC DNA] (CLONE H22)</scope>
</reference>
<reference key="2">
    <citation type="journal article" date="1979" name="Proc. Alfred Benzon Symp.">
        <title>Functional organization of the histone genes in the sea urchin Psammechinus: a progress report.</title>
        <authorList>
            <person name="Birnstiel M.L."/>
            <person name="Portmann R."/>
            <person name="Busslinger M."/>
            <person name="Schaffner W."/>
            <person name="Probst E."/>
            <person name="Kressmann A."/>
        </authorList>
    </citation>
    <scope>NUCLEOTIDE SEQUENCE [GENOMIC DNA] (CLONE H22)</scope>
</reference>
<reference key="3">
    <citation type="journal article" date="1980" name="Nucleic Acids Res.">
        <title>Ubiquitous and gene-specific regulatory 5' sequences in a sea urchin histone DNA clone coding for histone protein variants.</title>
        <authorList>
            <person name="Busslinger M."/>
            <person name="Portmann R."/>
            <person name="Irminger J.C."/>
            <person name="Birnstiel M.L."/>
        </authorList>
    </citation>
    <scope>NUCLEOTIDE SEQUENCE [GENOMIC DNA] (CLONE H19)</scope>
</reference>
<feature type="initiator methionine" description="Removed" evidence="1">
    <location>
        <position position="1"/>
    </location>
</feature>
<feature type="chain" id="PRO_0000221316" description="Histone H3, embryonic">
    <location>
        <begin position="2"/>
        <end position="136"/>
    </location>
</feature>
<feature type="region of interest" description="Disordered" evidence="2">
    <location>
        <begin position="1"/>
        <end position="43"/>
    </location>
</feature>
<feature type="modified residue" description="N6-methylated lysine" evidence="1">
    <location>
        <position position="5"/>
    </location>
</feature>
<feature type="modified residue" description="N6-acetyllysine; alternate" evidence="1">
    <location>
        <position position="10"/>
    </location>
</feature>
<feature type="modified residue" description="N6-methylated lysine; alternate" evidence="1">
    <location>
        <position position="10"/>
    </location>
</feature>
<feature type="modified residue" description="Phosphoserine" evidence="1">
    <location>
        <position position="11"/>
    </location>
</feature>
<feature type="modified residue" description="N6-acetyllysine" evidence="1">
    <location>
        <position position="15"/>
    </location>
</feature>
<feature type="modified residue" description="N6-acetyllysine" evidence="1">
    <location>
        <position position="24"/>
    </location>
</feature>
<feature type="modified residue" description="N6-methylated lysine" evidence="1">
    <location>
        <position position="28"/>
    </location>
</feature>
<feature type="modified residue" description="N6-methylated lysine" evidence="1">
    <location>
        <position position="37"/>
    </location>
</feature>
<feature type="modified residue" description="N6-methylated lysine" evidence="1">
    <location>
        <position position="80"/>
    </location>
</feature>
<accession>P69076</accession>
<accession>P02298</accession>
<accession>P05320</accession>
<accession>P05321</accession>
<accession>P05322</accession>
<comment type="function">
    <text>Core component of nucleosome. Nucleosomes wrap and compact DNA into chromatin, limiting DNA accessibility to the cellular machineries which require DNA as a template. Histones thereby play a central role in transcription regulation, DNA repair, DNA replication and chromosomal stability. DNA accessibility is regulated via a complex set of post-translational modifications of histones, also called histone code, and nucleosome remodeling.</text>
</comment>
<comment type="subunit">
    <text>The nucleosome is a histone octamer containing two molecules each of H2A, H2B, H3 and H4 assembled in one H3-H4 heterotetramer and two H2A-H2B heterodimers. The octamer wraps approximately 147 bp of DNA.</text>
</comment>
<comment type="subcellular location">
    <subcellularLocation>
        <location evidence="1">Nucleus</location>
    </subcellularLocation>
    <subcellularLocation>
        <location evidence="1">Chromosome</location>
    </subcellularLocation>
</comment>
<comment type="developmental stage">
    <text>This histone is expressed during late embryonic development.</text>
</comment>
<comment type="PTM">
    <text evidence="1">Acetylation is generally linked to gene activation.</text>
</comment>
<comment type="PTM">
    <text evidence="1">Methylation at Lys-5 is linked to gene activation. Methylation at Lys-10 is linked to gene repression (By similarity).</text>
</comment>
<comment type="similarity">
    <text evidence="3">Belongs to the histone H3 family.</text>
</comment>
<protein>
    <recommendedName>
        <fullName>Histone H3, embryonic</fullName>
    </recommendedName>
</protein>
<dbReference type="EMBL" id="J01181">
    <property type="protein sequence ID" value="AAB59206.1"/>
    <property type="molecule type" value="Genomic_DNA"/>
</dbReference>
<dbReference type="EMBL" id="X01345">
    <property type="protein sequence ID" value="CAA25632.1"/>
    <property type="molecule type" value="Genomic_DNA"/>
</dbReference>
<dbReference type="EMBL" id="V01143">
    <property type="protein sequence ID" value="CAA24375.1"/>
    <property type="molecule type" value="Genomic_DNA"/>
</dbReference>
<dbReference type="EMBL" id="V01144">
    <property type="protein sequence ID" value="CAA24382.1"/>
    <property type="status" value="ALT_SEQ"/>
    <property type="molecule type" value="Genomic_DNA"/>
</dbReference>
<dbReference type="EMBL" id="M10558">
    <property type="protein sequence ID" value="AAA30026.1"/>
    <property type="molecule type" value="Genomic_DNA"/>
</dbReference>
<dbReference type="PIR" id="C90776">
    <property type="entry name" value="HSUR3M"/>
</dbReference>
<dbReference type="SMR" id="P69076"/>
<dbReference type="GO" id="GO:0000786">
    <property type="term" value="C:nucleosome"/>
    <property type="evidence" value="ECO:0007669"/>
    <property type="project" value="UniProtKB-KW"/>
</dbReference>
<dbReference type="GO" id="GO:0005634">
    <property type="term" value="C:nucleus"/>
    <property type="evidence" value="ECO:0007669"/>
    <property type="project" value="UniProtKB-SubCell"/>
</dbReference>
<dbReference type="GO" id="GO:0003677">
    <property type="term" value="F:DNA binding"/>
    <property type="evidence" value="ECO:0007669"/>
    <property type="project" value="UniProtKB-KW"/>
</dbReference>
<dbReference type="GO" id="GO:0046982">
    <property type="term" value="F:protein heterodimerization activity"/>
    <property type="evidence" value="ECO:0007669"/>
    <property type="project" value="InterPro"/>
</dbReference>
<dbReference type="GO" id="GO:0030527">
    <property type="term" value="F:structural constituent of chromatin"/>
    <property type="evidence" value="ECO:0007669"/>
    <property type="project" value="InterPro"/>
</dbReference>
<dbReference type="CDD" id="cd22911">
    <property type="entry name" value="HFD_H3"/>
    <property type="match status" value="1"/>
</dbReference>
<dbReference type="FunFam" id="1.10.20.10:FF:000078">
    <property type="entry name" value="Histone H3"/>
    <property type="match status" value="1"/>
</dbReference>
<dbReference type="FunFam" id="1.10.20.10:FF:000044">
    <property type="entry name" value="Histone H3.3"/>
    <property type="match status" value="1"/>
</dbReference>
<dbReference type="Gene3D" id="1.10.20.10">
    <property type="entry name" value="Histone, subunit A"/>
    <property type="match status" value="1"/>
</dbReference>
<dbReference type="InterPro" id="IPR009072">
    <property type="entry name" value="Histone-fold"/>
</dbReference>
<dbReference type="InterPro" id="IPR007125">
    <property type="entry name" value="Histone_H2A/H2B/H3"/>
</dbReference>
<dbReference type="InterPro" id="IPR000164">
    <property type="entry name" value="Histone_H3/CENP-A"/>
</dbReference>
<dbReference type="PANTHER" id="PTHR11426">
    <property type="entry name" value="HISTONE H3"/>
    <property type="match status" value="1"/>
</dbReference>
<dbReference type="Pfam" id="PF00125">
    <property type="entry name" value="Histone"/>
    <property type="match status" value="1"/>
</dbReference>
<dbReference type="PRINTS" id="PR00622">
    <property type="entry name" value="HISTONEH3"/>
</dbReference>
<dbReference type="SMART" id="SM00428">
    <property type="entry name" value="H3"/>
    <property type="match status" value="1"/>
</dbReference>
<dbReference type="SUPFAM" id="SSF47113">
    <property type="entry name" value="Histone-fold"/>
    <property type="match status" value="1"/>
</dbReference>
<dbReference type="PROSITE" id="PS00322">
    <property type="entry name" value="HISTONE_H3_1"/>
    <property type="match status" value="1"/>
</dbReference>
<dbReference type="PROSITE" id="PS00959">
    <property type="entry name" value="HISTONE_H3_2"/>
    <property type="match status" value="1"/>
</dbReference>
<keyword id="KW-0007">Acetylation</keyword>
<keyword id="KW-0158">Chromosome</keyword>
<keyword id="KW-0238">DNA-binding</keyword>
<keyword id="KW-0488">Methylation</keyword>
<keyword id="KW-0544">Nucleosome core</keyword>
<keyword id="KW-0539">Nucleus</keyword>
<keyword id="KW-0597">Phosphoprotein</keyword>
<proteinExistence type="evidence at transcript level"/>
<name>H3_PSAMI</name>
<evidence type="ECO:0000250" key="1"/>
<evidence type="ECO:0000256" key="2">
    <source>
        <dbReference type="SAM" id="MobiDB-lite"/>
    </source>
</evidence>
<evidence type="ECO:0000305" key="3"/>
<sequence>MARTKQTARKSTGGKAPRKQLATKAARKSAPATGGVKKPHRYRPGTVALREIRRYQKSTELLIRKLPFQRLVREIAQDFKTELRFQSSAVMALQEASEAYLVGLFEDTNLCAIHAKRVTIMPKDIQLARRIRGERA</sequence>
<organism>
    <name type="scientific">Psammechinus miliaris</name>
    <name type="common">Green sea urchin</name>
    <name type="synonym">Echinus miliaris</name>
    <dbReference type="NCBI Taxonomy" id="7660"/>
    <lineage>
        <taxon>Eukaryota</taxon>
        <taxon>Metazoa</taxon>
        <taxon>Echinodermata</taxon>
        <taxon>Eleutherozoa</taxon>
        <taxon>Echinozoa</taxon>
        <taxon>Echinoidea</taxon>
        <taxon>Euechinoidea</taxon>
        <taxon>Echinacea</taxon>
        <taxon>Camarodonta</taxon>
        <taxon>Echinidea</taxon>
        <taxon>Parechinidae</taxon>
        <taxon>Psammechinus</taxon>
    </lineage>
</organism>